<sequence>MSKLRLGVLFGGRSQEHEVSVMSARSVVKMAKKEKYKVIPFGITKKGQWVGPEESWNILNNGINEVKASKDRCITESVRVFLDHKLDIVFPVLHGPYGEDGKLQGFLDCLDIPYIGASVLSSAAGMDKEIMKNLFSYHKIPQARYRVYRQNHLENGLDGIISEIDRFLGWPCFVKPANMGSSIGVSKVHSPGEVKKALEKGFYYDRKLIFEEFVEGREIECSVLGNDQVEASLPGEILPGKEFYDYEAKYKDNKTRLVIPASLDESVIDKARNLAIKAFKAIDGNGFARVDFFLKNNGVLLVNEINTIPGFTQYSMYPKLWEATGLNYPDLIDKLIELALEDR</sequence>
<organism>
    <name type="scientific">Halothermothrix orenii (strain H 168 / OCM 544 / DSM 9562)</name>
    <dbReference type="NCBI Taxonomy" id="373903"/>
    <lineage>
        <taxon>Bacteria</taxon>
        <taxon>Bacillati</taxon>
        <taxon>Bacillota</taxon>
        <taxon>Clostridia</taxon>
        <taxon>Halanaerobiales</taxon>
        <taxon>Halothermotrichaceae</taxon>
        <taxon>Halothermothrix</taxon>
    </lineage>
</organism>
<accession>B8CWI5</accession>
<protein>
    <recommendedName>
        <fullName evidence="2">D-alanine--D-alanine ligase</fullName>
        <ecNumber evidence="2">6.3.2.4</ecNumber>
    </recommendedName>
    <alternativeName>
        <fullName evidence="2">D-Ala-D-Ala ligase</fullName>
    </alternativeName>
    <alternativeName>
        <fullName evidence="2">D-alanylalanine synthetase</fullName>
    </alternativeName>
</protein>
<name>DDL_HALOH</name>
<dbReference type="EC" id="6.3.2.4" evidence="2"/>
<dbReference type="EMBL" id="CP001098">
    <property type="protein sequence ID" value="ACL69654.1"/>
    <property type="molecule type" value="Genomic_DNA"/>
</dbReference>
<dbReference type="RefSeq" id="WP_012635841.1">
    <property type="nucleotide sequence ID" value="NC_011899.1"/>
</dbReference>
<dbReference type="SMR" id="B8CWI5"/>
<dbReference type="STRING" id="373903.Hore_08980"/>
<dbReference type="KEGG" id="hor:Hore_08980"/>
<dbReference type="eggNOG" id="COG1181">
    <property type="taxonomic scope" value="Bacteria"/>
</dbReference>
<dbReference type="HOGENOM" id="CLU_039268_0_0_9"/>
<dbReference type="OrthoDB" id="9813261at2"/>
<dbReference type="UniPathway" id="UPA00219"/>
<dbReference type="Proteomes" id="UP000000719">
    <property type="component" value="Chromosome"/>
</dbReference>
<dbReference type="GO" id="GO:0005829">
    <property type="term" value="C:cytosol"/>
    <property type="evidence" value="ECO:0007669"/>
    <property type="project" value="TreeGrafter"/>
</dbReference>
<dbReference type="GO" id="GO:0005524">
    <property type="term" value="F:ATP binding"/>
    <property type="evidence" value="ECO:0007669"/>
    <property type="project" value="UniProtKB-KW"/>
</dbReference>
<dbReference type="GO" id="GO:0008716">
    <property type="term" value="F:D-alanine-D-alanine ligase activity"/>
    <property type="evidence" value="ECO:0007669"/>
    <property type="project" value="UniProtKB-UniRule"/>
</dbReference>
<dbReference type="GO" id="GO:0046872">
    <property type="term" value="F:metal ion binding"/>
    <property type="evidence" value="ECO:0007669"/>
    <property type="project" value="UniProtKB-KW"/>
</dbReference>
<dbReference type="GO" id="GO:0071555">
    <property type="term" value="P:cell wall organization"/>
    <property type="evidence" value="ECO:0007669"/>
    <property type="project" value="UniProtKB-KW"/>
</dbReference>
<dbReference type="GO" id="GO:0009252">
    <property type="term" value="P:peptidoglycan biosynthetic process"/>
    <property type="evidence" value="ECO:0007669"/>
    <property type="project" value="UniProtKB-UniRule"/>
</dbReference>
<dbReference type="GO" id="GO:0008360">
    <property type="term" value="P:regulation of cell shape"/>
    <property type="evidence" value="ECO:0007669"/>
    <property type="project" value="UniProtKB-KW"/>
</dbReference>
<dbReference type="FunFam" id="3.30.470.20:FF:000008">
    <property type="entry name" value="D-alanine--D-alanine ligase"/>
    <property type="match status" value="1"/>
</dbReference>
<dbReference type="Gene3D" id="3.40.50.20">
    <property type="match status" value="1"/>
</dbReference>
<dbReference type="Gene3D" id="3.30.1490.20">
    <property type="entry name" value="ATP-grasp fold, A domain"/>
    <property type="match status" value="1"/>
</dbReference>
<dbReference type="Gene3D" id="3.30.470.20">
    <property type="entry name" value="ATP-grasp fold, B domain"/>
    <property type="match status" value="1"/>
</dbReference>
<dbReference type="HAMAP" id="MF_00047">
    <property type="entry name" value="Dala_Dala_lig"/>
    <property type="match status" value="1"/>
</dbReference>
<dbReference type="InterPro" id="IPR011761">
    <property type="entry name" value="ATP-grasp"/>
</dbReference>
<dbReference type="InterPro" id="IPR013815">
    <property type="entry name" value="ATP_grasp_subdomain_1"/>
</dbReference>
<dbReference type="InterPro" id="IPR000291">
    <property type="entry name" value="D-Ala_lig_Van_CS"/>
</dbReference>
<dbReference type="InterPro" id="IPR005905">
    <property type="entry name" value="D_ala_D_ala"/>
</dbReference>
<dbReference type="InterPro" id="IPR011095">
    <property type="entry name" value="Dala_Dala_lig_C"/>
</dbReference>
<dbReference type="InterPro" id="IPR011127">
    <property type="entry name" value="Dala_Dala_lig_N"/>
</dbReference>
<dbReference type="InterPro" id="IPR016185">
    <property type="entry name" value="PreATP-grasp_dom_sf"/>
</dbReference>
<dbReference type="NCBIfam" id="TIGR01205">
    <property type="entry name" value="D_ala_D_alaTIGR"/>
    <property type="match status" value="1"/>
</dbReference>
<dbReference type="NCBIfam" id="NF002378">
    <property type="entry name" value="PRK01372.1"/>
    <property type="match status" value="1"/>
</dbReference>
<dbReference type="NCBIfam" id="NF002528">
    <property type="entry name" value="PRK01966.1-4"/>
    <property type="match status" value="1"/>
</dbReference>
<dbReference type="PANTHER" id="PTHR23132">
    <property type="entry name" value="D-ALANINE--D-ALANINE LIGASE"/>
    <property type="match status" value="1"/>
</dbReference>
<dbReference type="PANTHER" id="PTHR23132:SF25">
    <property type="entry name" value="D-ALANINE--D-ALANINE LIGASE A"/>
    <property type="match status" value="1"/>
</dbReference>
<dbReference type="Pfam" id="PF07478">
    <property type="entry name" value="Dala_Dala_lig_C"/>
    <property type="match status" value="1"/>
</dbReference>
<dbReference type="Pfam" id="PF01820">
    <property type="entry name" value="Dala_Dala_lig_N"/>
    <property type="match status" value="1"/>
</dbReference>
<dbReference type="PIRSF" id="PIRSF039102">
    <property type="entry name" value="Ddl/VanB"/>
    <property type="match status" value="1"/>
</dbReference>
<dbReference type="SUPFAM" id="SSF56059">
    <property type="entry name" value="Glutathione synthetase ATP-binding domain-like"/>
    <property type="match status" value="1"/>
</dbReference>
<dbReference type="SUPFAM" id="SSF52440">
    <property type="entry name" value="PreATP-grasp domain"/>
    <property type="match status" value="1"/>
</dbReference>
<dbReference type="PROSITE" id="PS50975">
    <property type="entry name" value="ATP_GRASP"/>
    <property type="match status" value="1"/>
</dbReference>
<dbReference type="PROSITE" id="PS00843">
    <property type="entry name" value="DALA_DALA_LIGASE_1"/>
    <property type="match status" value="1"/>
</dbReference>
<dbReference type="PROSITE" id="PS00844">
    <property type="entry name" value="DALA_DALA_LIGASE_2"/>
    <property type="match status" value="1"/>
</dbReference>
<reference key="1">
    <citation type="journal article" date="2009" name="PLoS ONE">
        <title>Genome analysis of the anaerobic thermohalophilic bacterium Halothermothrix orenii.</title>
        <authorList>
            <person name="Mavromatis K."/>
            <person name="Ivanova N."/>
            <person name="Anderson I."/>
            <person name="Lykidis A."/>
            <person name="Hooper S.D."/>
            <person name="Sun H."/>
            <person name="Kunin V."/>
            <person name="Lapidus A."/>
            <person name="Hugenholtz P."/>
            <person name="Patel B."/>
            <person name="Kyrpides N.C."/>
        </authorList>
    </citation>
    <scope>NUCLEOTIDE SEQUENCE [LARGE SCALE GENOMIC DNA]</scope>
    <source>
        <strain>H 168 / OCM 544 / DSM 9562</strain>
    </source>
</reference>
<proteinExistence type="inferred from homology"/>
<feature type="chain" id="PRO_1000189738" description="D-alanine--D-alanine ligase">
    <location>
        <begin position="1"/>
        <end position="343"/>
    </location>
</feature>
<feature type="domain" description="ATP-grasp" evidence="2">
    <location>
        <begin position="132"/>
        <end position="337"/>
    </location>
</feature>
<feature type="binding site" evidence="2">
    <location>
        <begin position="165"/>
        <end position="220"/>
    </location>
    <ligand>
        <name>ATP</name>
        <dbReference type="ChEBI" id="CHEBI:30616"/>
    </ligand>
</feature>
<feature type="binding site" evidence="2">
    <location>
        <position position="291"/>
    </location>
    <ligand>
        <name>Mg(2+)</name>
        <dbReference type="ChEBI" id="CHEBI:18420"/>
        <label>1</label>
    </ligand>
</feature>
<feature type="binding site" evidence="2">
    <location>
        <position position="304"/>
    </location>
    <ligand>
        <name>Mg(2+)</name>
        <dbReference type="ChEBI" id="CHEBI:18420"/>
        <label>1</label>
    </ligand>
</feature>
<feature type="binding site" evidence="2">
    <location>
        <position position="304"/>
    </location>
    <ligand>
        <name>Mg(2+)</name>
        <dbReference type="ChEBI" id="CHEBI:18420"/>
        <label>2</label>
    </ligand>
</feature>
<feature type="binding site" evidence="2">
    <location>
        <position position="306"/>
    </location>
    <ligand>
        <name>Mg(2+)</name>
        <dbReference type="ChEBI" id="CHEBI:18420"/>
        <label>2</label>
    </ligand>
</feature>
<keyword id="KW-0067">ATP-binding</keyword>
<keyword id="KW-0133">Cell shape</keyword>
<keyword id="KW-0961">Cell wall biogenesis/degradation</keyword>
<keyword id="KW-0963">Cytoplasm</keyword>
<keyword id="KW-0436">Ligase</keyword>
<keyword id="KW-0460">Magnesium</keyword>
<keyword id="KW-0464">Manganese</keyword>
<keyword id="KW-0479">Metal-binding</keyword>
<keyword id="KW-0547">Nucleotide-binding</keyword>
<keyword id="KW-0573">Peptidoglycan synthesis</keyword>
<keyword id="KW-1185">Reference proteome</keyword>
<gene>
    <name evidence="2" type="primary">ddl</name>
    <name type="ordered locus">Hore_08980</name>
</gene>
<evidence type="ECO:0000250" key="1"/>
<evidence type="ECO:0000255" key="2">
    <source>
        <dbReference type="HAMAP-Rule" id="MF_00047"/>
    </source>
</evidence>
<comment type="function">
    <text evidence="2">Cell wall formation.</text>
</comment>
<comment type="catalytic activity">
    <reaction evidence="2">
        <text>2 D-alanine + ATP = D-alanyl-D-alanine + ADP + phosphate + H(+)</text>
        <dbReference type="Rhea" id="RHEA:11224"/>
        <dbReference type="ChEBI" id="CHEBI:15378"/>
        <dbReference type="ChEBI" id="CHEBI:30616"/>
        <dbReference type="ChEBI" id="CHEBI:43474"/>
        <dbReference type="ChEBI" id="CHEBI:57416"/>
        <dbReference type="ChEBI" id="CHEBI:57822"/>
        <dbReference type="ChEBI" id="CHEBI:456216"/>
        <dbReference type="EC" id="6.3.2.4"/>
    </reaction>
</comment>
<comment type="cofactor">
    <cofactor evidence="1">
        <name>Mg(2+)</name>
        <dbReference type="ChEBI" id="CHEBI:18420"/>
    </cofactor>
    <cofactor evidence="1">
        <name>Mn(2+)</name>
        <dbReference type="ChEBI" id="CHEBI:29035"/>
    </cofactor>
    <text evidence="1">Binds 2 magnesium or manganese ions per subunit.</text>
</comment>
<comment type="pathway">
    <text evidence="2">Cell wall biogenesis; peptidoglycan biosynthesis.</text>
</comment>
<comment type="subcellular location">
    <subcellularLocation>
        <location evidence="2">Cytoplasm</location>
    </subcellularLocation>
</comment>
<comment type="similarity">
    <text evidence="2">Belongs to the D-alanine--D-alanine ligase family.</text>
</comment>